<organism>
    <name type="scientific">Homo sapiens</name>
    <name type="common">Human</name>
    <dbReference type="NCBI Taxonomy" id="9606"/>
    <lineage>
        <taxon>Eukaryota</taxon>
        <taxon>Metazoa</taxon>
        <taxon>Chordata</taxon>
        <taxon>Craniata</taxon>
        <taxon>Vertebrata</taxon>
        <taxon>Euteleostomi</taxon>
        <taxon>Mammalia</taxon>
        <taxon>Eutheria</taxon>
        <taxon>Euarchontoglires</taxon>
        <taxon>Primates</taxon>
        <taxon>Haplorrhini</taxon>
        <taxon>Catarrhini</taxon>
        <taxon>Hominidae</taxon>
        <taxon>Homo</taxon>
    </lineage>
</organism>
<proteinExistence type="evidence at protein level"/>
<evidence type="ECO:0000256" key="1">
    <source>
        <dbReference type="SAM" id="MobiDB-lite"/>
    </source>
</evidence>
<evidence type="ECO:0000269" key="2">
    <source>
    </source>
</evidence>
<evidence type="ECO:0000269" key="3">
    <source>
    </source>
</evidence>
<evidence type="ECO:0000269" key="4">
    <source>
    </source>
</evidence>
<evidence type="ECO:0000303" key="5">
    <source>
    </source>
</evidence>
<evidence type="ECO:0000312" key="6">
    <source>
        <dbReference type="HGNC" id="HGNC:10965"/>
    </source>
</evidence>
<name>BWR1B_HUMAN</name>
<reference key="1">
    <citation type="journal article" date="1998" name="Genomics">
        <title>Divergently transcribed overlapping genes expressed in liver and kidney and located in the 11p15.5 imprinted domain.</title>
        <authorList>
            <person name="Cooper P.R."/>
            <person name="Smilinich N.J."/>
            <person name="Day C.D."/>
            <person name="Nowak N.J."/>
            <person name="Reid L.H."/>
            <person name="Pearsall R.S."/>
            <person name="Reece M."/>
            <person name="Prawitt D."/>
            <person name="Landers J."/>
            <person name="Housman D.E."/>
            <person name="Winterpacht A."/>
            <person name="Zabel B.U."/>
            <person name="Pelletier J."/>
            <person name="Weissman B.E."/>
            <person name="Shows T.B."/>
            <person name="Higgins M.J."/>
        </authorList>
    </citation>
    <scope>NUCLEOTIDE SEQUENCE [MRNA] (ISOFORM 1)</scope>
    <scope>VARIANTS ASP-89 AND ARG-133</scope>
</reference>
<reference key="2">
    <citation type="journal article" date="1998" name="Proc. Natl. Acad. Sci. U.S.A.">
        <title>Transcriptional map of 170-kb region at chromosome 11p15.5: identification and mutational analysis of the BWR1A gene reveals the presence of mutations in tumor samples.</title>
        <authorList>
            <person name="Schwienbacher C."/>
            <person name="Sabbioni S."/>
            <person name="Campi M."/>
            <person name="Veronese A."/>
            <person name="Bernardi G."/>
            <person name="Menegatti A."/>
            <person name="Hatada I."/>
            <person name="Mukai T."/>
            <person name="Ohashi H."/>
            <person name="Barbanti-Brodano G."/>
            <person name="Croce C.M."/>
            <person name="Negrini M."/>
        </authorList>
    </citation>
    <scope>NUCLEOTIDE SEQUENCE [MRNA] (ISOFORM 1)</scope>
    <scope>VARIANTS ASP-89 AND ARG-133</scope>
    <scope>TISSUE SPECIFICITY</scope>
</reference>
<reference key="3">
    <citation type="journal article" date="2006" name="Nature">
        <title>Human chromosome 11 DNA sequence and analysis including novel gene identification.</title>
        <authorList>
            <person name="Taylor T.D."/>
            <person name="Noguchi H."/>
            <person name="Totoki Y."/>
            <person name="Toyoda A."/>
            <person name="Kuroki Y."/>
            <person name="Dewar K."/>
            <person name="Lloyd C."/>
            <person name="Itoh T."/>
            <person name="Takeda T."/>
            <person name="Kim D.-W."/>
            <person name="She X."/>
            <person name="Barlow K.F."/>
            <person name="Bloom T."/>
            <person name="Bruford E."/>
            <person name="Chang J.L."/>
            <person name="Cuomo C.A."/>
            <person name="Eichler E."/>
            <person name="FitzGerald M.G."/>
            <person name="Jaffe D.B."/>
            <person name="LaButti K."/>
            <person name="Nicol R."/>
            <person name="Park H.-S."/>
            <person name="Seaman C."/>
            <person name="Sougnez C."/>
            <person name="Yang X."/>
            <person name="Zimmer A.R."/>
            <person name="Zody M.C."/>
            <person name="Birren B.W."/>
            <person name="Nusbaum C."/>
            <person name="Fujiyama A."/>
            <person name="Hattori M."/>
            <person name="Rogers J."/>
            <person name="Lander E.S."/>
            <person name="Sakaki Y."/>
        </authorList>
    </citation>
    <scope>NUCLEOTIDE SEQUENCE [LARGE SCALE GENOMIC DNA]</scope>
</reference>
<reference key="4">
    <citation type="journal article" date="2004" name="Genome Res.">
        <title>The status, quality, and expansion of the NIH full-length cDNA project: the Mammalian Gene Collection (MGC).</title>
        <authorList>
            <consortium name="The MGC Project Team"/>
        </authorList>
    </citation>
    <scope>NUCLEOTIDE SEQUENCE [LARGE SCALE MRNA] (ISOFORM 2)</scope>
</reference>
<reference key="5">
    <citation type="journal article" date="2004" name="BMC Genet.">
        <title>Paternal imprinting of the SLC22A1LS gene located in the human chromosome segment 11p15.5.</title>
        <authorList>
            <person name="Bajaj V."/>
            <person name="Markandaya M."/>
            <person name="Krishna L."/>
            <person name="Kumar A."/>
        </authorList>
    </citation>
    <scope>TISSUE SPECIFICITY</scope>
</reference>
<accession>Q8N1D0</accession>
<accession>E9PLK8</accession>
<accession>O43563</accession>
<comment type="interaction">
    <interactant intactId="EBI-12829638">
        <id>Q8N1D0-2</id>
    </interactant>
    <interactant intactId="EBI-740376">
        <id>Q86UW9</id>
        <label>DTX2</label>
    </interactant>
    <organismsDiffer>false</organismsDiffer>
    <experiments>3</experiments>
</comment>
<comment type="interaction">
    <interactant intactId="EBI-12829638">
        <id>Q8N1D0-2</id>
    </interactant>
    <interactant intactId="EBI-725515">
        <id>O43559</id>
        <label>FRS3</label>
    </interactant>
    <organismsDiffer>false</organismsDiffer>
    <experiments>3</experiments>
</comment>
<comment type="interaction">
    <interactant intactId="EBI-12829638">
        <id>Q8N1D0-2</id>
    </interactant>
    <interactant intactId="EBI-6509505">
        <id>Q0VD86</id>
        <label>INCA1</label>
    </interactant>
    <organismsDiffer>false</organismsDiffer>
    <experiments>3</experiments>
</comment>
<comment type="interaction">
    <interactant intactId="EBI-12829638">
        <id>Q8N1D0-2</id>
    </interactant>
    <interactant intactId="EBI-11742836">
        <id>Q16656-4</id>
        <label>NRF1</label>
    </interactant>
    <organismsDiffer>false</organismsDiffer>
    <experiments>3</experiments>
</comment>
<comment type="interaction">
    <interactant intactId="EBI-12829638">
        <id>Q8N1D0-2</id>
    </interactant>
    <interactant intactId="EBI-948354">
        <id>Q6DKK2</id>
        <label>TTC19</label>
    </interactant>
    <organismsDiffer>false</organismsDiffer>
    <experiments>5</experiments>
</comment>
<comment type="alternative products">
    <event type="alternative splicing"/>
    <isoform>
        <id>Q8N1D0-1</id>
        <name>1</name>
        <sequence type="displayed"/>
    </isoform>
    <isoform>
        <id>Q8N1D0-2</id>
        <name>2</name>
        <sequence type="described" ref="VSP_016499"/>
    </isoform>
</comment>
<comment type="tissue specificity">
    <text evidence="2 3">Most abundantly expressed in gastrointestinal tissues. Expressed at lower levels in kidney and placenta. Expressed in fetal brain, liver, placenta, kidney and lung.</text>
</comment>
<dbReference type="EMBL" id="AF037066">
    <property type="protein sequence ID" value="AAC04789.1"/>
    <property type="molecule type" value="mRNA"/>
</dbReference>
<dbReference type="EMBL" id="AF035407">
    <property type="protein sequence ID" value="AAC17497.1"/>
    <property type="molecule type" value="mRNA"/>
</dbReference>
<dbReference type="EMBL" id="AC013791">
    <property type="status" value="NOT_ANNOTATED_CDS"/>
    <property type="molecule type" value="Genomic_DNA"/>
</dbReference>
<dbReference type="EMBL" id="BC030237">
    <property type="protein sequence ID" value="AAH30237.1"/>
    <property type="molecule type" value="mRNA"/>
</dbReference>
<dbReference type="RefSeq" id="NP_001289791.1">
    <property type="nucleotide sequence ID" value="NM_001302862.1"/>
</dbReference>
<dbReference type="RefSeq" id="NP_009036.2">
    <property type="nucleotide sequence ID" value="NM_007105.3"/>
</dbReference>
<dbReference type="RefSeq" id="XP_016873323.1">
    <property type="nucleotide sequence ID" value="XM_017017834.1"/>
</dbReference>
<dbReference type="RefSeq" id="XP_016873324.1">
    <property type="nucleotide sequence ID" value="XM_017017835.1"/>
</dbReference>
<dbReference type="RefSeq" id="XP_016873325.1">
    <property type="nucleotide sequence ID" value="XM_017017836.1"/>
</dbReference>
<dbReference type="BioGRID" id="111045">
    <property type="interactions" value="6"/>
</dbReference>
<dbReference type="IntAct" id="Q8N1D0">
    <property type="interactions" value="5"/>
</dbReference>
<dbReference type="STRING" id="9606.ENSP00000488024"/>
<dbReference type="iPTMnet" id="Q8N1D0"/>
<dbReference type="PhosphoSitePlus" id="Q8N1D0"/>
<dbReference type="BioMuta" id="SLC22A18AS"/>
<dbReference type="DMDM" id="425906069"/>
<dbReference type="MassIVE" id="Q8N1D0"/>
<dbReference type="PaxDb" id="9606-ENSP00000433282"/>
<dbReference type="ProteomicsDB" id="21827"/>
<dbReference type="ProteomicsDB" id="71586">
    <molecule id="Q8N1D0-1"/>
</dbReference>
<dbReference type="Antibodypedia" id="54464">
    <property type="antibodies" value="48 antibodies from 15 providers"/>
</dbReference>
<dbReference type="DNASU" id="5003"/>
<dbReference type="AGR" id="HGNC:10965"/>
<dbReference type="DisGeNET" id="5003"/>
<dbReference type="GeneCards" id="SLC22A18AS"/>
<dbReference type="HGNC" id="HGNC:10965">
    <property type="gene designation" value="SLC67A1-AS"/>
</dbReference>
<dbReference type="MIM" id="603240">
    <property type="type" value="gene"/>
</dbReference>
<dbReference type="neXtProt" id="NX_Q8N1D0"/>
<dbReference type="PharmGKB" id="PA35847"/>
<dbReference type="VEuPathDB" id="HostDB:ENSG00000254827"/>
<dbReference type="eggNOG" id="ENOG502TFJQ">
    <property type="taxonomic scope" value="Eukaryota"/>
</dbReference>
<dbReference type="HOGENOM" id="CLU_1098228_0_0_1"/>
<dbReference type="InParanoid" id="Q8N1D0"/>
<dbReference type="OMA" id="EGMWENC"/>
<dbReference type="OrthoDB" id="9526232at2759"/>
<dbReference type="PAN-GO" id="Q8N1D0">
    <property type="GO annotations" value="0 GO annotations based on evolutionary models"/>
</dbReference>
<dbReference type="PhylomeDB" id="Q8N1D0"/>
<dbReference type="TreeFam" id="TF341850"/>
<dbReference type="PathwayCommons" id="Q8N1D0"/>
<dbReference type="SignaLink" id="Q8N1D0"/>
<dbReference type="BioGRID-ORCS" id="5003">
    <property type="hits" value="13 hits in 1145 CRISPR screens"/>
</dbReference>
<dbReference type="GenomeRNAi" id="5003"/>
<dbReference type="Pharos" id="Q8N1D0">
    <property type="development level" value="Tdark"/>
</dbReference>
<dbReference type="PRO" id="PR:Q8N1D0"/>
<dbReference type="Proteomes" id="UP000005640">
    <property type="component" value="Chromosome 11"/>
</dbReference>
<dbReference type="RNAct" id="Q8N1D0">
    <property type="molecule type" value="protein"/>
</dbReference>
<dbReference type="Bgee" id="ENSG00000254827">
    <property type="expression patterns" value="Expressed in mucosa of transverse colon and 89 other cell types or tissues"/>
</dbReference>
<sequence>MGELPGSEGMWENCPLGWVKKKASGTLAPLDFLLQRKRLWLWASEPVRPQPQGIHRFREARRQFCRMRGSRLTGGRKGFGSSGLRFGRGGFSEEVMPQPVLKAMRCAEGAWWFSPDGPAGSAASIWPAEGAEGLPGQLGRDRLEVVYSVPDNVPGQNGSRRPLVCKITGKCLSVCSEENAKAGGCSAFPLLLSQLGARMTGREHAHKGPELTTPDSGLPRPPNPALAGFRALAQHSPPLGTSTPSAVLLSAAT</sequence>
<keyword id="KW-0025">Alternative splicing</keyword>
<keyword id="KW-1185">Reference proteome</keyword>
<feature type="chain" id="PRO_0000076187" description="Uncharacterized protein SLC67A1-AS">
    <location>
        <begin position="1"/>
        <end position="253"/>
    </location>
</feature>
<feature type="region of interest" description="Disordered" evidence="1">
    <location>
        <begin position="200"/>
        <end position="225"/>
    </location>
</feature>
<feature type="region of interest" description="Disordered" evidence="1">
    <location>
        <begin position="234"/>
        <end position="253"/>
    </location>
</feature>
<feature type="compositionally biased region" description="Basic and acidic residues" evidence="1">
    <location>
        <begin position="200"/>
        <end position="209"/>
    </location>
</feature>
<feature type="splice variant" id="VSP_016499" description="In isoform 2." evidence="5">
    <location>
        <begin position="1"/>
        <end position="103"/>
    </location>
</feature>
<feature type="sequence variant" id="VAR_068886" description="In dbSNP:rs365605." evidence="3 4">
    <original>G</original>
    <variation>D</variation>
    <location>
        <position position="89"/>
    </location>
</feature>
<feature type="sequence variant" id="VAR_024064" description="In dbSNP:rs441071." evidence="3 4">
    <original>G</original>
    <variation>R</variation>
    <location>
        <position position="133"/>
    </location>
</feature>
<gene>
    <name evidence="6" type="primary">SLC67A1-AS</name>
    <name type="synonym">BWR1B</name>
    <name type="synonym">BWSCR1B</name>
    <name type="synonym">ORCTL2S</name>
    <name type="synonym">SLC22A18AS</name>
    <name type="synonym">SLC22A1LS</name>
</gene>
<protein>
    <recommendedName>
        <fullName>Uncharacterized protein SLC67A1-AS</fullName>
    </recommendedName>
    <alternativeName>
        <fullName>Beckwith-Wiedemann syndrome chromosomal region 1 candidate gene B protein</fullName>
    </alternativeName>
    <alternativeName>
        <fullName>Organic cation transporter-like protein 2 antisense protein</fullName>
    </alternativeName>
    <alternativeName>
        <fullName>SLC67A1 antisense RNA</fullName>
    </alternativeName>
    <alternativeName>
        <fullName>Solute carrier family 22 member 1-like antisense protein</fullName>
    </alternativeName>
    <alternativeName>
        <fullName>Solute carrier family 22 member 18 antisense protein</fullName>
    </alternativeName>
    <alternativeName>
        <fullName>p27-Beckwith-Wiedemann region 1 B</fullName>
        <shortName>p27-BWR1B</shortName>
    </alternativeName>
</protein>